<protein>
    <recommendedName>
        <fullName>Uncharacterized 14.9 kDa protein in LEF8-FP intergenic region</fullName>
    </recommendedName>
</protein>
<accession>P41456</accession>
<organism>
    <name type="scientific">Autographa californica nuclear polyhedrosis virus</name>
    <name type="common">AcMNPV</name>
    <dbReference type="NCBI Taxonomy" id="46015"/>
    <lineage>
        <taxon>Viruses</taxon>
        <taxon>Viruses incertae sedis</taxon>
        <taxon>Naldaviricetes</taxon>
        <taxon>Lefavirales</taxon>
        <taxon>Baculoviridae</taxon>
        <taxon>Alphabaculovirus</taxon>
        <taxon>Alphabaculovirus aucalifornicae</taxon>
    </lineage>
</organism>
<sequence length="123" mass="14866">MTWPYSNSFKLIKAYQKHSNTYQSCTNHKYKSVLLKKWTQDVMDNELRIESRPYKNCDAFCQMCLSVVTINEYLCCDKCLFPIIDYLEKQRQLTPRQQLYMFVFLSICYWKEAAERRLATMKN</sequence>
<reference key="1">
    <citation type="journal article" date="1994" name="Virology">
        <title>The complete DNA sequence of Autographa californica nuclear polyhedrosis virus.</title>
        <authorList>
            <person name="Ayres M.D."/>
            <person name="Howard S.C."/>
            <person name="Kuzio J."/>
            <person name="Lopez-Ferber M."/>
            <person name="Possee R.D."/>
        </authorList>
    </citation>
    <scope>NUCLEOTIDE SEQUENCE [LARGE SCALE GENOMIC DNA]</scope>
    <source>
        <strain>C6</strain>
    </source>
</reference>
<keyword id="KW-1185">Reference proteome</keyword>
<name>Y052_NPVAC</name>
<organismHost>
    <name type="scientific">Lepidoptera</name>
    <name type="common">butterflies and moths</name>
    <dbReference type="NCBI Taxonomy" id="7088"/>
</organismHost>
<proteinExistence type="predicted"/>
<feature type="chain" id="PRO_0000132984" description="Uncharacterized 14.9 kDa protein in LEF8-FP intergenic region">
    <location>
        <begin position="1"/>
        <end position="123"/>
    </location>
</feature>
<dbReference type="EMBL" id="L22858">
    <property type="protein sequence ID" value="AAA66682.1"/>
    <property type="molecule type" value="Genomic_DNA"/>
</dbReference>
<dbReference type="PIR" id="D72856">
    <property type="entry name" value="D72856"/>
</dbReference>
<dbReference type="RefSeq" id="NP_054081.1">
    <property type="nucleotide sequence ID" value="NC_001623.1"/>
</dbReference>
<dbReference type="SMR" id="P41456"/>
<dbReference type="GeneID" id="1403884"/>
<dbReference type="KEGG" id="vg:1403884"/>
<dbReference type="OrthoDB" id="19223at10239"/>
<dbReference type="Proteomes" id="UP000008292">
    <property type="component" value="Segment"/>
</dbReference>
<dbReference type="InterPro" id="IPR020201">
    <property type="entry name" value="AcMNPV_Orf52"/>
</dbReference>
<dbReference type="Pfam" id="PF11077">
    <property type="entry name" value="DUF2616"/>
    <property type="match status" value="1"/>
</dbReference>